<gene>
    <name type="primary">spc25</name>
    <name type="synonym">spbc25</name>
    <name type="ORF">TEgg030h02.1</name>
</gene>
<reference key="1">
    <citation type="submission" date="2006-03" db="EMBL/GenBank/DDBJ databases">
        <authorList>
            <consortium name="Sanger Xenopus tropicalis EST/cDNA project"/>
        </authorList>
    </citation>
    <scope>NUCLEOTIDE SEQUENCE [LARGE SCALE MRNA]</scope>
    <source>
        <tissue>Egg</tissue>
    </source>
</reference>
<reference key="2">
    <citation type="submission" date="2004-07" db="EMBL/GenBank/DDBJ databases">
        <authorList>
            <consortium name="NIH - Xenopus Gene Collection (XGC) project"/>
        </authorList>
    </citation>
    <scope>NUCLEOTIDE SEQUENCE [LARGE SCALE MRNA]</scope>
    <source>
        <strain>F6</strain>
    </source>
</reference>
<sequence length="228" mass="26858">MSALKMDEEQSLNVYMQEFRTRFINRSSEEVTSQALKESYKDSAQTDAWFKKYRDGELMIEKVLEFRNEITLQNKRIEEKQKNILQEAAKQGEHEQIKEELTERIQRLREELNKKREVALANRKANKERIKELQKSATLFRERLGLEIRKLRGDKLQFVFRCINPKDLDQPYSCIISLNAEGEYEVTGCDPPLECIAEFQEKVRETRNFSALLANLRKSFTALGSQVK</sequence>
<proteinExistence type="evidence at transcript level"/>
<comment type="function">
    <text evidence="2">Acts as a component of the essential kinetochore-associated NDC80 complex, which is required for chromosome segregation and spindle checkpoint activity. Required for kinetochore integrity and the organization of stable microtubule binding sites in the outer plate of the kinetochore. The NDC80 complex synergistically enhances the affinity of the SKA1 complex for microtubules and may allow the NDC80 complex to track depolymerizing microtubules.</text>
</comment>
<comment type="subunit">
    <text evidence="1">Component of the NDC80 complex, which is composed of ndc80, cdca1, spbc24 and spbc25. The NDC80 complex interacts with mis12 and zwint (By similarity).</text>
</comment>
<comment type="subcellular location">
    <subcellularLocation>
        <location evidence="2">Nucleus</location>
    </subcellularLocation>
    <subcellularLocation>
        <location evidence="2">Chromosome</location>
        <location evidence="2">Centromere</location>
        <location evidence="2">Kinetochore</location>
    </subcellularLocation>
    <text evidence="2">Localizes to kinetochores from late prophase to anaphase. Localizes specifically to the outer plate of the kinetochore.</text>
</comment>
<comment type="similarity">
    <text evidence="4">Belongs to the SPC25 family.</text>
</comment>
<feature type="chain" id="PRO_0000249569" description="Kinetochore protein Spc25">
    <location>
        <begin position="1"/>
        <end position="228"/>
    </location>
</feature>
<feature type="coiled-coil region" evidence="3">
    <location>
        <begin position="61"/>
        <end position="144"/>
    </location>
</feature>
<organism>
    <name type="scientific">Xenopus tropicalis</name>
    <name type="common">Western clawed frog</name>
    <name type="synonym">Silurana tropicalis</name>
    <dbReference type="NCBI Taxonomy" id="8364"/>
    <lineage>
        <taxon>Eukaryota</taxon>
        <taxon>Metazoa</taxon>
        <taxon>Chordata</taxon>
        <taxon>Craniata</taxon>
        <taxon>Vertebrata</taxon>
        <taxon>Euteleostomi</taxon>
        <taxon>Amphibia</taxon>
        <taxon>Batrachia</taxon>
        <taxon>Anura</taxon>
        <taxon>Pipoidea</taxon>
        <taxon>Pipidae</taxon>
        <taxon>Xenopodinae</taxon>
        <taxon>Xenopus</taxon>
        <taxon>Silurana</taxon>
    </lineage>
</organism>
<keyword id="KW-0131">Cell cycle</keyword>
<keyword id="KW-0132">Cell division</keyword>
<keyword id="KW-0137">Centromere</keyword>
<keyword id="KW-0158">Chromosome</keyword>
<keyword id="KW-0175">Coiled coil</keyword>
<keyword id="KW-0995">Kinetochore</keyword>
<keyword id="KW-0498">Mitosis</keyword>
<keyword id="KW-0539">Nucleus</keyword>
<keyword id="KW-1185">Reference proteome</keyword>
<evidence type="ECO:0000250" key="1"/>
<evidence type="ECO:0000250" key="2">
    <source>
        <dbReference type="UniProtKB" id="Q9HBM1"/>
    </source>
</evidence>
<evidence type="ECO:0000255" key="3"/>
<evidence type="ECO:0000305" key="4"/>
<dbReference type="EMBL" id="CR761196">
    <property type="protein sequence ID" value="CAJ81876.1"/>
    <property type="molecule type" value="mRNA"/>
</dbReference>
<dbReference type="EMBL" id="BC076904">
    <property type="protein sequence ID" value="AAH76904.1"/>
    <property type="molecule type" value="mRNA"/>
</dbReference>
<dbReference type="RefSeq" id="NP_001005041.1">
    <property type="nucleotide sequence ID" value="NM_001005041.1"/>
</dbReference>
<dbReference type="RefSeq" id="XP_012823697.1">
    <property type="nucleotide sequence ID" value="XM_012968243.3"/>
</dbReference>
<dbReference type="RefSeq" id="XP_012823698.1">
    <property type="nucleotide sequence ID" value="XM_012968244.3"/>
</dbReference>
<dbReference type="RefSeq" id="XP_012823699.1">
    <property type="nucleotide sequence ID" value="XM_012968245.3"/>
</dbReference>
<dbReference type="RefSeq" id="XP_012823700.1">
    <property type="nucleotide sequence ID" value="XM_012968246.2"/>
</dbReference>
<dbReference type="SMR" id="Q6DF39"/>
<dbReference type="FunCoup" id="Q6DF39">
    <property type="interactions" value="682"/>
</dbReference>
<dbReference type="STRING" id="8364.ENSXETP00000045330"/>
<dbReference type="PaxDb" id="8364-ENSXETP00000022695"/>
<dbReference type="DNASU" id="448571"/>
<dbReference type="GeneID" id="448571"/>
<dbReference type="KEGG" id="xtr:448571"/>
<dbReference type="AGR" id="Xenbase:XB-GENE-950628"/>
<dbReference type="CTD" id="57405"/>
<dbReference type="Xenbase" id="XB-GENE-950628">
    <property type="gene designation" value="spc25"/>
</dbReference>
<dbReference type="eggNOG" id="KOG4657">
    <property type="taxonomic scope" value="Eukaryota"/>
</dbReference>
<dbReference type="HOGENOM" id="CLU_102420_0_0_1"/>
<dbReference type="InParanoid" id="Q6DF39"/>
<dbReference type="OMA" id="KNINEFW"/>
<dbReference type="OrthoDB" id="6353017at2759"/>
<dbReference type="TreeFam" id="TF332941"/>
<dbReference type="Reactome" id="R-XTR-141444">
    <property type="pathway name" value="Amplification of signal from unattached kinetochores via a MAD2 inhibitory signal"/>
</dbReference>
<dbReference type="Reactome" id="R-XTR-2467813">
    <property type="pathway name" value="Separation of Sister Chromatids"/>
</dbReference>
<dbReference type="Reactome" id="R-XTR-2500257">
    <property type="pathway name" value="Resolution of Sister Chromatid Cohesion"/>
</dbReference>
<dbReference type="Reactome" id="R-XTR-5663220">
    <property type="pathway name" value="RHO GTPases Activate Formins"/>
</dbReference>
<dbReference type="Reactome" id="R-XTR-68877">
    <property type="pathway name" value="Mitotic Prometaphase"/>
</dbReference>
<dbReference type="Reactome" id="R-XTR-9648025">
    <property type="pathway name" value="EML4 and NUDC in mitotic spindle formation"/>
</dbReference>
<dbReference type="Proteomes" id="UP000008143">
    <property type="component" value="Chromosome 8"/>
</dbReference>
<dbReference type="Bgee" id="ENSXETG00000010306">
    <property type="expression patterns" value="Expressed in ovary and 12 other cell types or tissues"/>
</dbReference>
<dbReference type="ExpressionAtlas" id="Q6DF39">
    <property type="expression patterns" value="baseline"/>
</dbReference>
<dbReference type="GO" id="GO:0000776">
    <property type="term" value="C:kinetochore"/>
    <property type="evidence" value="ECO:0000250"/>
    <property type="project" value="UniProtKB"/>
</dbReference>
<dbReference type="GO" id="GO:0031262">
    <property type="term" value="C:Ndc80 complex"/>
    <property type="evidence" value="ECO:0000250"/>
    <property type="project" value="UniProtKB"/>
</dbReference>
<dbReference type="GO" id="GO:0005634">
    <property type="term" value="C:nucleus"/>
    <property type="evidence" value="ECO:0007669"/>
    <property type="project" value="UniProtKB-SubCell"/>
</dbReference>
<dbReference type="GO" id="GO:0051301">
    <property type="term" value="P:cell division"/>
    <property type="evidence" value="ECO:0007669"/>
    <property type="project" value="UniProtKB-KW"/>
</dbReference>
<dbReference type="GO" id="GO:0007059">
    <property type="term" value="P:chromosome segregation"/>
    <property type="evidence" value="ECO:0000250"/>
    <property type="project" value="UniProtKB"/>
</dbReference>
<dbReference type="GO" id="GO:0007052">
    <property type="term" value="P:mitotic spindle organization"/>
    <property type="evidence" value="ECO:0000250"/>
    <property type="project" value="UniProtKB"/>
</dbReference>
<dbReference type="CDD" id="cd23784">
    <property type="entry name" value="RWD_Spc25"/>
    <property type="match status" value="1"/>
</dbReference>
<dbReference type="FunFam" id="3.30.457.50:FF:000001">
    <property type="entry name" value="Probable kinetochore protein spc25"/>
    <property type="match status" value="1"/>
</dbReference>
<dbReference type="Gene3D" id="3.30.457.50">
    <property type="entry name" value="Chromosome segregation protein Spc25"/>
    <property type="match status" value="1"/>
</dbReference>
<dbReference type="InterPro" id="IPR045143">
    <property type="entry name" value="Spc25"/>
</dbReference>
<dbReference type="InterPro" id="IPR013255">
    <property type="entry name" value="Spc25_C"/>
</dbReference>
<dbReference type="PANTHER" id="PTHR14281:SF0">
    <property type="entry name" value="KINETOCHORE PROTEIN SPC25"/>
    <property type="match status" value="1"/>
</dbReference>
<dbReference type="PANTHER" id="PTHR14281">
    <property type="entry name" value="KINETOCHORE PROTEIN SPC25-RELATED"/>
    <property type="match status" value="1"/>
</dbReference>
<dbReference type="Pfam" id="PF08234">
    <property type="entry name" value="Spindle_Spc25"/>
    <property type="match status" value="1"/>
</dbReference>
<name>SPC25_XENTR</name>
<accession>Q6DF39</accession>
<protein>
    <recommendedName>
        <fullName>Kinetochore protein Spc25</fullName>
    </recommendedName>
</protein>